<feature type="chain" id="PRO_0000359380" description="5'-methylthioadenosine/S-adenosylhomocysteine nucleosidase">
    <location>
        <begin position="1"/>
        <end position="232"/>
    </location>
</feature>
<feature type="active site" description="Proton acceptor" evidence="1">
    <location>
        <position position="12"/>
    </location>
</feature>
<feature type="active site" description="Proton donor" evidence="1">
    <location>
        <position position="198"/>
    </location>
</feature>
<feature type="binding site" evidence="1">
    <location>
        <position position="78"/>
    </location>
    <ligand>
        <name>substrate</name>
    </ligand>
</feature>
<feature type="binding site" evidence="1">
    <location>
        <position position="153"/>
    </location>
    <ligand>
        <name>substrate</name>
    </ligand>
</feature>
<feature type="binding site" evidence="1">
    <location>
        <begin position="174"/>
        <end position="175"/>
    </location>
    <ligand>
        <name>substrate</name>
    </ligand>
</feature>
<sequence>MKVAIIGAMEEEVALLRNQIQNLKTEIHGGFEYYLGQINAIDVILLRSGIGKVNAAIGTALLIKLYEPDYVINTGSAGGFHTDLEVGDIVISQSVCHHDVDVTPFGYARGQVPGHPECYLADIHLIDIAKRSIDALQEVTHMHGLIATGDRFMHLPEDVATTREYFPDMIACEMEAAAVAQTCHAFETPFVIIRSLSDIAGKENAVTFEQYLDKAATHSARLILEMLTHLKS</sequence>
<protein>
    <recommendedName>
        <fullName evidence="1">5'-methylthioadenosine/S-adenosylhomocysteine nucleosidase</fullName>
        <shortName evidence="1">MTA/SAH nucleosidase</shortName>
        <shortName evidence="1">MTAN</shortName>
        <ecNumber evidence="1">3.2.2.9</ecNumber>
    </recommendedName>
    <alternativeName>
        <fullName evidence="1">5'-deoxyadenosine nucleosidase</fullName>
        <shortName evidence="1">DOA nucleosidase</shortName>
        <shortName evidence="1">dAdo nucleosidase</shortName>
    </alternativeName>
    <alternativeName>
        <fullName evidence="1">5'-methylthioadenosine nucleosidase</fullName>
        <shortName evidence="1">MTA nucleosidase</shortName>
    </alternativeName>
    <alternativeName>
        <fullName evidence="1">S-adenosylhomocysteine nucleosidase</fullName>
        <shortName evidence="1">AdoHcy nucleosidase</shortName>
        <shortName evidence="1">SAH nucleosidase</shortName>
        <shortName evidence="1">SRH nucleosidase</shortName>
    </alternativeName>
</protein>
<keyword id="KW-0028">Amino-acid biosynthesis</keyword>
<keyword id="KW-0378">Hydrolase</keyword>
<keyword id="KW-0486">Methionine biosynthesis</keyword>
<comment type="function">
    <text evidence="1">Catalyzes the irreversible cleavage of the glycosidic bond in both 5'-methylthioadenosine (MTA) and S-adenosylhomocysteine (SAH/AdoHcy) to adenine and the corresponding thioribose, 5'-methylthioribose and S-ribosylhomocysteine, respectively. Also cleaves 5'-deoxyadenosine, a toxic by-product of radical S-adenosylmethionine (SAM) enzymes, into 5-deoxyribose and adenine.</text>
</comment>
<comment type="catalytic activity">
    <reaction evidence="1">
        <text>S-adenosyl-L-homocysteine + H2O = S-(5-deoxy-D-ribos-5-yl)-L-homocysteine + adenine</text>
        <dbReference type="Rhea" id="RHEA:17805"/>
        <dbReference type="ChEBI" id="CHEBI:15377"/>
        <dbReference type="ChEBI" id="CHEBI:16708"/>
        <dbReference type="ChEBI" id="CHEBI:57856"/>
        <dbReference type="ChEBI" id="CHEBI:58195"/>
        <dbReference type="EC" id="3.2.2.9"/>
    </reaction>
</comment>
<comment type="catalytic activity">
    <reaction evidence="1">
        <text>S-methyl-5'-thioadenosine + H2O = 5-(methylsulfanyl)-D-ribose + adenine</text>
        <dbReference type="Rhea" id="RHEA:13617"/>
        <dbReference type="ChEBI" id="CHEBI:15377"/>
        <dbReference type="ChEBI" id="CHEBI:16708"/>
        <dbReference type="ChEBI" id="CHEBI:17509"/>
        <dbReference type="ChEBI" id="CHEBI:78440"/>
        <dbReference type="EC" id="3.2.2.9"/>
    </reaction>
</comment>
<comment type="catalytic activity">
    <reaction evidence="1">
        <text>5'-deoxyadenosine + H2O = 5-deoxy-D-ribose + adenine</text>
        <dbReference type="Rhea" id="RHEA:29859"/>
        <dbReference type="ChEBI" id="CHEBI:15377"/>
        <dbReference type="ChEBI" id="CHEBI:16708"/>
        <dbReference type="ChEBI" id="CHEBI:17319"/>
        <dbReference type="ChEBI" id="CHEBI:149540"/>
        <dbReference type="EC" id="3.2.2.9"/>
    </reaction>
    <physiologicalReaction direction="left-to-right" evidence="1">
        <dbReference type="Rhea" id="RHEA:29860"/>
    </physiologicalReaction>
</comment>
<comment type="pathway">
    <text evidence="1">Amino-acid biosynthesis; L-methionine biosynthesis via salvage pathway; S-methyl-5-thio-alpha-D-ribose 1-phosphate from S-methyl-5'-thioadenosine (hydrolase route): step 1/2.</text>
</comment>
<comment type="similarity">
    <text evidence="1">Belongs to the PNP/UDP phosphorylase family. MtnN subfamily.</text>
</comment>
<gene>
    <name evidence="1" type="primary">mtnN</name>
    <name type="ordered locus">Tcr_2130</name>
</gene>
<evidence type="ECO:0000255" key="1">
    <source>
        <dbReference type="HAMAP-Rule" id="MF_01684"/>
    </source>
</evidence>
<organism>
    <name type="scientific">Hydrogenovibrio crunogenus (strain DSM 25203 / XCL-2)</name>
    <name type="common">Thiomicrospira crunogena</name>
    <dbReference type="NCBI Taxonomy" id="317025"/>
    <lineage>
        <taxon>Bacteria</taxon>
        <taxon>Pseudomonadati</taxon>
        <taxon>Pseudomonadota</taxon>
        <taxon>Gammaproteobacteria</taxon>
        <taxon>Thiotrichales</taxon>
        <taxon>Piscirickettsiaceae</taxon>
        <taxon>Hydrogenovibrio</taxon>
    </lineage>
</organism>
<accession>Q31DQ5</accession>
<reference key="1">
    <citation type="journal article" date="2006" name="PLoS Biol.">
        <title>The genome of deep-sea vent chemolithoautotroph Thiomicrospira crunogena XCL-2.</title>
        <authorList>
            <person name="Scott K.M."/>
            <person name="Sievert S.M."/>
            <person name="Abril F.N."/>
            <person name="Ball L.A."/>
            <person name="Barrett C.J."/>
            <person name="Blake R.A."/>
            <person name="Boller A.J."/>
            <person name="Chain P.S.G."/>
            <person name="Clark J.A."/>
            <person name="Davis C.R."/>
            <person name="Detter C."/>
            <person name="Do K.F."/>
            <person name="Dobrinski K.P."/>
            <person name="Faza B.I."/>
            <person name="Fitzpatrick K.A."/>
            <person name="Freyermuth S.K."/>
            <person name="Harmer T.L."/>
            <person name="Hauser L.J."/>
            <person name="Huegler M."/>
            <person name="Kerfeld C.A."/>
            <person name="Klotz M.G."/>
            <person name="Kong W.W."/>
            <person name="Land M."/>
            <person name="Lapidus A."/>
            <person name="Larimer F.W."/>
            <person name="Longo D.L."/>
            <person name="Lucas S."/>
            <person name="Malfatti S.A."/>
            <person name="Massey S.E."/>
            <person name="Martin D.D."/>
            <person name="McCuddin Z."/>
            <person name="Meyer F."/>
            <person name="Moore J.L."/>
            <person name="Ocampo L.H. Jr."/>
            <person name="Paul J.H."/>
            <person name="Paulsen I.T."/>
            <person name="Reep D.K."/>
            <person name="Ren Q."/>
            <person name="Ross R.L."/>
            <person name="Sato P.Y."/>
            <person name="Thomas P."/>
            <person name="Tinkham L.E."/>
            <person name="Zeruth G.T."/>
        </authorList>
    </citation>
    <scope>NUCLEOTIDE SEQUENCE [LARGE SCALE GENOMIC DNA]</scope>
    <source>
        <strain>DSM 25203 / XCL-2</strain>
    </source>
</reference>
<proteinExistence type="inferred from homology"/>
<dbReference type="EC" id="3.2.2.9" evidence="1"/>
<dbReference type="EMBL" id="CP000109">
    <property type="protein sequence ID" value="ABB42718.1"/>
    <property type="molecule type" value="Genomic_DNA"/>
</dbReference>
<dbReference type="SMR" id="Q31DQ5"/>
<dbReference type="STRING" id="317025.Tcr_2130"/>
<dbReference type="KEGG" id="tcx:Tcr_2130"/>
<dbReference type="eggNOG" id="COG0775">
    <property type="taxonomic scope" value="Bacteria"/>
</dbReference>
<dbReference type="HOGENOM" id="CLU_031248_2_2_6"/>
<dbReference type="OrthoDB" id="9792278at2"/>
<dbReference type="UniPathway" id="UPA00904">
    <property type="reaction ID" value="UER00871"/>
</dbReference>
<dbReference type="GO" id="GO:0005829">
    <property type="term" value="C:cytosol"/>
    <property type="evidence" value="ECO:0007669"/>
    <property type="project" value="TreeGrafter"/>
</dbReference>
<dbReference type="GO" id="GO:0008782">
    <property type="term" value="F:adenosylhomocysteine nucleosidase activity"/>
    <property type="evidence" value="ECO:0007669"/>
    <property type="project" value="UniProtKB-UniRule"/>
</dbReference>
<dbReference type="GO" id="GO:0008930">
    <property type="term" value="F:methylthioadenosine nucleosidase activity"/>
    <property type="evidence" value="ECO:0007669"/>
    <property type="project" value="UniProtKB-UniRule"/>
</dbReference>
<dbReference type="GO" id="GO:0019509">
    <property type="term" value="P:L-methionine salvage from methylthioadenosine"/>
    <property type="evidence" value="ECO:0007669"/>
    <property type="project" value="UniProtKB-UniRule"/>
</dbReference>
<dbReference type="GO" id="GO:0019284">
    <property type="term" value="P:L-methionine salvage from S-adenosylmethionine"/>
    <property type="evidence" value="ECO:0007669"/>
    <property type="project" value="TreeGrafter"/>
</dbReference>
<dbReference type="GO" id="GO:0009164">
    <property type="term" value="P:nucleoside catabolic process"/>
    <property type="evidence" value="ECO:0007669"/>
    <property type="project" value="InterPro"/>
</dbReference>
<dbReference type="CDD" id="cd09008">
    <property type="entry name" value="MTAN"/>
    <property type="match status" value="1"/>
</dbReference>
<dbReference type="FunFam" id="3.40.50.1580:FF:000001">
    <property type="entry name" value="MTA/SAH nucleosidase family protein"/>
    <property type="match status" value="1"/>
</dbReference>
<dbReference type="Gene3D" id="3.40.50.1580">
    <property type="entry name" value="Nucleoside phosphorylase domain"/>
    <property type="match status" value="1"/>
</dbReference>
<dbReference type="HAMAP" id="MF_01684">
    <property type="entry name" value="Salvage_MtnN"/>
    <property type="match status" value="1"/>
</dbReference>
<dbReference type="InterPro" id="IPR010049">
    <property type="entry name" value="MTA_SAH_Nsdase"/>
</dbReference>
<dbReference type="InterPro" id="IPR000845">
    <property type="entry name" value="Nucleoside_phosphorylase_d"/>
</dbReference>
<dbReference type="InterPro" id="IPR035994">
    <property type="entry name" value="Nucleoside_phosphorylase_sf"/>
</dbReference>
<dbReference type="NCBIfam" id="TIGR01704">
    <property type="entry name" value="MTA_SAH-Nsdase"/>
    <property type="match status" value="1"/>
</dbReference>
<dbReference type="NCBIfam" id="NF004079">
    <property type="entry name" value="PRK05584.1"/>
    <property type="match status" value="1"/>
</dbReference>
<dbReference type="PANTHER" id="PTHR46832">
    <property type="entry name" value="5'-METHYLTHIOADENOSINE/S-ADENOSYLHOMOCYSTEINE NUCLEOSIDASE"/>
    <property type="match status" value="1"/>
</dbReference>
<dbReference type="PANTHER" id="PTHR46832:SF1">
    <property type="entry name" value="5'-METHYLTHIOADENOSINE_S-ADENOSYLHOMOCYSTEINE NUCLEOSIDASE"/>
    <property type="match status" value="1"/>
</dbReference>
<dbReference type="Pfam" id="PF01048">
    <property type="entry name" value="PNP_UDP_1"/>
    <property type="match status" value="1"/>
</dbReference>
<dbReference type="SUPFAM" id="SSF53167">
    <property type="entry name" value="Purine and uridine phosphorylases"/>
    <property type="match status" value="1"/>
</dbReference>
<name>MTNN_HYDCU</name>